<gene>
    <name type="primary">grxD</name>
    <name type="ordered locus">NTHI1333</name>
</gene>
<feature type="chain" id="PRO_0000293133" description="Glutaredoxin 4">
    <location>
        <begin position="1"/>
        <end position="107"/>
    </location>
</feature>
<feature type="domain" description="Glutaredoxin" evidence="2">
    <location>
        <begin position="4"/>
        <end position="106"/>
    </location>
</feature>
<feature type="binding site" evidence="1">
    <location>
        <position position="21"/>
    </location>
    <ligand>
        <name>glutathione</name>
        <dbReference type="ChEBI" id="CHEBI:57925"/>
    </ligand>
</feature>
<feature type="binding site" evidence="1">
    <location>
        <position position="29"/>
    </location>
    <ligand>
        <name>[2Fe-2S] cluster</name>
        <dbReference type="ChEBI" id="CHEBI:190135"/>
        <note>ligand shared between dimeric partners</note>
    </ligand>
</feature>
<feature type="binding site" evidence="1">
    <location>
        <position position="58"/>
    </location>
    <ligand>
        <name>glutathione</name>
        <dbReference type="ChEBI" id="CHEBI:57925"/>
    </ligand>
</feature>
<feature type="binding site" evidence="1">
    <location>
        <position position="70"/>
    </location>
    <ligand>
        <name>glutathione</name>
        <dbReference type="ChEBI" id="CHEBI:57925"/>
    </ligand>
</feature>
<feature type="binding site" evidence="1">
    <location>
        <begin position="83"/>
        <end position="84"/>
    </location>
    <ligand>
        <name>glutathione</name>
        <dbReference type="ChEBI" id="CHEBI:57925"/>
    </ligand>
</feature>
<organism>
    <name type="scientific">Haemophilus influenzae (strain 86-028NP)</name>
    <dbReference type="NCBI Taxonomy" id="281310"/>
    <lineage>
        <taxon>Bacteria</taxon>
        <taxon>Pseudomonadati</taxon>
        <taxon>Pseudomonadota</taxon>
        <taxon>Gammaproteobacteria</taxon>
        <taxon>Pasteurellales</taxon>
        <taxon>Pasteurellaceae</taxon>
        <taxon>Haemophilus</taxon>
    </lineage>
</organism>
<proteinExistence type="inferred from homology"/>
<protein>
    <recommendedName>
        <fullName>Glutaredoxin 4</fullName>
        <shortName>Grx4</shortName>
    </recommendedName>
    <alternativeName>
        <fullName>Monothiol glutaredoxin</fullName>
    </alternativeName>
</protein>
<evidence type="ECO:0000250" key="1"/>
<evidence type="ECO:0000255" key="2">
    <source>
        <dbReference type="PROSITE-ProRule" id="PRU00686"/>
    </source>
</evidence>
<evidence type="ECO:0000305" key="3"/>
<name>GLRX4_HAEI8</name>
<dbReference type="EMBL" id="CP000057">
    <property type="protein sequence ID" value="AAX88165.1"/>
    <property type="status" value="ALT_INIT"/>
    <property type="molecule type" value="Genomic_DNA"/>
</dbReference>
<dbReference type="RefSeq" id="WP_005653629.1">
    <property type="nucleotide sequence ID" value="NC_007146.2"/>
</dbReference>
<dbReference type="SMR" id="Q4QLD2"/>
<dbReference type="GeneID" id="93220171"/>
<dbReference type="KEGG" id="hit:NTHI1333"/>
<dbReference type="HOGENOM" id="CLU_026126_2_1_6"/>
<dbReference type="Proteomes" id="UP000002525">
    <property type="component" value="Chromosome"/>
</dbReference>
<dbReference type="GO" id="GO:0005737">
    <property type="term" value="C:cytoplasm"/>
    <property type="evidence" value="ECO:0007669"/>
    <property type="project" value="UniProtKB-SubCell"/>
</dbReference>
<dbReference type="GO" id="GO:0051537">
    <property type="term" value="F:2 iron, 2 sulfur cluster binding"/>
    <property type="evidence" value="ECO:0007669"/>
    <property type="project" value="UniProtKB-KW"/>
</dbReference>
<dbReference type="GO" id="GO:0015036">
    <property type="term" value="F:disulfide oxidoreductase activity"/>
    <property type="evidence" value="ECO:0007669"/>
    <property type="project" value="InterPro"/>
</dbReference>
<dbReference type="GO" id="GO:0046872">
    <property type="term" value="F:metal ion binding"/>
    <property type="evidence" value="ECO:0007669"/>
    <property type="project" value="UniProtKB-KW"/>
</dbReference>
<dbReference type="CDD" id="cd03028">
    <property type="entry name" value="GRX_PICOT_like"/>
    <property type="match status" value="1"/>
</dbReference>
<dbReference type="FunFam" id="3.40.30.10:FF:000006">
    <property type="entry name" value="Glutaredoxin"/>
    <property type="match status" value="1"/>
</dbReference>
<dbReference type="Gene3D" id="3.40.30.10">
    <property type="entry name" value="Glutaredoxin"/>
    <property type="match status" value="1"/>
</dbReference>
<dbReference type="InterPro" id="IPR002109">
    <property type="entry name" value="Glutaredoxin"/>
</dbReference>
<dbReference type="InterPro" id="IPR033658">
    <property type="entry name" value="GRX_PICOT-like"/>
</dbReference>
<dbReference type="InterPro" id="IPR014434">
    <property type="entry name" value="Monothiol_GRX"/>
</dbReference>
<dbReference type="InterPro" id="IPR004480">
    <property type="entry name" value="Monothiol_GRX-rel"/>
</dbReference>
<dbReference type="InterPro" id="IPR036249">
    <property type="entry name" value="Thioredoxin-like_sf"/>
</dbReference>
<dbReference type="NCBIfam" id="TIGR00365">
    <property type="entry name" value="Grx4 family monothiol glutaredoxin"/>
    <property type="match status" value="1"/>
</dbReference>
<dbReference type="PANTHER" id="PTHR10293">
    <property type="entry name" value="GLUTAREDOXIN FAMILY MEMBER"/>
    <property type="match status" value="1"/>
</dbReference>
<dbReference type="PANTHER" id="PTHR10293:SF72">
    <property type="entry name" value="MONOTHIOL GLUTAREDOXIN-S14, CHLOROPLASTIC"/>
    <property type="match status" value="1"/>
</dbReference>
<dbReference type="Pfam" id="PF00462">
    <property type="entry name" value="Glutaredoxin"/>
    <property type="match status" value="1"/>
</dbReference>
<dbReference type="PIRSF" id="PIRSF005894">
    <property type="entry name" value="Monothiol_GRX"/>
    <property type="match status" value="1"/>
</dbReference>
<dbReference type="SUPFAM" id="SSF52833">
    <property type="entry name" value="Thioredoxin-like"/>
    <property type="match status" value="1"/>
</dbReference>
<dbReference type="PROSITE" id="PS51354">
    <property type="entry name" value="GLUTAREDOXIN_2"/>
    <property type="match status" value="1"/>
</dbReference>
<reference key="1">
    <citation type="journal article" date="2005" name="J. Bacteriol.">
        <title>Genomic sequence of an otitis media isolate of nontypeable Haemophilus influenzae: comparative study with H. influenzae serotype d, strain KW20.</title>
        <authorList>
            <person name="Harrison A."/>
            <person name="Dyer D.W."/>
            <person name="Gillaspy A."/>
            <person name="Ray W.C."/>
            <person name="Mungur R."/>
            <person name="Carson M.B."/>
            <person name="Zhong H."/>
            <person name="Gipson J."/>
            <person name="Gipson M."/>
            <person name="Johnson L.S."/>
            <person name="Lewis L."/>
            <person name="Bakaletz L.O."/>
            <person name="Munson R.S. Jr."/>
        </authorList>
    </citation>
    <scope>NUCLEOTIDE SEQUENCE [LARGE SCALE GENOMIC DNA]</scope>
    <source>
        <strain>86-028NP</strain>
    </source>
</reference>
<keyword id="KW-0001">2Fe-2S</keyword>
<keyword id="KW-0963">Cytoplasm</keyword>
<keyword id="KW-0408">Iron</keyword>
<keyword id="KW-0411">Iron-sulfur</keyword>
<keyword id="KW-0479">Metal-binding</keyword>
<keyword id="KW-0676">Redox-active center</keyword>
<comment type="function">
    <text evidence="1">Monothiol glutaredoxin involved in the biogenesis of iron-sulfur clusters.</text>
</comment>
<comment type="subunit">
    <text evidence="1">Homodimer.</text>
</comment>
<comment type="subcellular location">
    <subcellularLocation>
        <location evidence="1">Cytoplasm</location>
    </subcellularLocation>
</comment>
<comment type="similarity">
    <text evidence="3">Belongs to the glutaredoxin family. Monothiol subfamily.</text>
</comment>
<comment type="sequence caution" evidence="3">
    <conflict type="erroneous initiation">
        <sequence resource="EMBL-CDS" id="AAX88165"/>
    </conflict>
    <text>Extended N-terminus.</text>
</comment>
<sequence>METLDKIKKQISENPILIYMKGSPKLPSCGFSARASEALMHCKVPFGYVDILQHPDIRAELPTYANWPTFPQLWVEGELIGGCDIILEMYQAGELQTLLAEVAAKHA</sequence>
<accession>Q4QLD2</accession>